<feature type="chain" id="PRO_1000188975" description="Acetyl esterase">
    <location>
        <begin position="1"/>
        <end position="319"/>
    </location>
</feature>
<feature type="short sequence motif" description="Involved in the stabilization of the negatively charged intermediate by the formation of the oxyanion hole" evidence="1">
    <location>
        <begin position="91"/>
        <end position="93"/>
    </location>
</feature>
<feature type="active site" evidence="2">
    <location>
        <position position="165"/>
    </location>
</feature>
<feature type="active site" evidence="2">
    <location>
        <position position="262"/>
    </location>
</feature>
<feature type="active site" evidence="2">
    <location>
        <position position="292"/>
    </location>
</feature>
<gene>
    <name evidence="2" type="primary">aes</name>
    <name type="ordered locus">E2348C_0411</name>
</gene>
<proteinExistence type="inferred from homology"/>
<dbReference type="EC" id="3.1.1.-" evidence="2"/>
<dbReference type="EMBL" id="FM180568">
    <property type="protein sequence ID" value="CAS07959.1"/>
    <property type="molecule type" value="Genomic_DNA"/>
</dbReference>
<dbReference type="RefSeq" id="WP_000801821.1">
    <property type="nucleotide sequence ID" value="NC_011601.1"/>
</dbReference>
<dbReference type="SMR" id="B7UKF6"/>
<dbReference type="ESTHER" id="ecoli-Aes">
    <property type="family name" value="Acetyl_esterase"/>
</dbReference>
<dbReference type="MEROPS" id="S09.A47"/>
<dbReference type="KEGG" id="ecg:E2348C_0411"/>
<dbReference type="HOGENOM" id="CLU_012494_6_4_6"/>
<dbReference type="Proteomes" id="UP000008205">
    <property type="component" value="Chromosome"/>
</dbReference>
<dbReference type="GO" id="GO:0005737">
    <property type="term" value="C:cytoplasm"/>
    <property type="evidence" value="ECO:0007669"/>
    <property type="project" value="UniProtKB-SubCell"/>
</dbReference>
<dbReference type="GO" id="GO:0052689">
    <property type="term" value="F:carboxylic ester hydrolase activity"/>
    <property type="evidence" value="ECO:0007669"/>
    <property type="project" value="UniProtKB-UniRule"/>
</dbReference>
<dbReference type="FunFam" id="3.40.50.1820:FF:000035">
    <property type="entry name" value="Acetyl esterase"/>
    <property type="match status" value="1"/>
</dbReference>
<dbReference type="Gene3D" id="3.40.50.1820">
    <property type="entry name" value="alpha/beta hydrolase"/>
    <property type="match status" value="1"/>
</dbReference>
<dbReference type="HAMAP" id="MF_01958">
    <property type="entry name" value="Acetyl_esterase"/>
    <property type="match status" value="1"/>
</dbReference>
<dbReference type="InterPro" id="IPR013094">
    <property type="entry name" value="AB_hydrolase_3"/>
</dbReference>
<dbReference type="InterPro" id="IPR029058">
    <property type="entry name" value="AB_hydrolase_fold"/>
</dbReference>
<dbReference type="InterPro" id="IPR023508">
    <property type="entry name" value="Acetyl_esterase"/>
</dbReference>
<dbReference type="InterPro" id="IPR050300">
    <property type="entry name" value="GDXG_lipolytic_enzyme"/>
</dbReference>
<dbReference type="InterPro" id="IPR002168">
    <property type="entry name" value="Lipase_GDXG_HIS_AS"/>
</dbReference>
<dbReference type="InterPro" id="IPR033140">
    <property type="entry name" value="Lipase_GDXG_put_SER_AS"/>
</dbReference>
<dbReference type="NCBIfam" id="NF007547">
    <property type="entry name" value="PRK10162.1"/>
    <property type="match status" value="1"/>
</dbReference>
<dbReference type="PANTHER" id="PTHR48081">
    <property type="entry name" value="AB HYDROLASE SUPERFAMILY PROTEIN C4A8.06C"/>
    <property type="match status" value="1"/>
</dbReference>
<dbReference type="PANTHER" id="PTHR48081:SF8">
    <property type="entry name" value="ALPHA_BETA HYDROLASE FOLD-3 DOMAIN-CONTAINING PROTEIN-RELATED"/>
    <property type="match status" value="1"/>
</dbReference>
<dbReference type="Pfam" id="PF07859">
    <property type="entry name" value="Abhydrolase_3"/>
    <property type="match status" value="1"/>
</dbReference>
<dbReference type="SUPFAM" id="SSF53474">
    <property type="entry name" value="alpha/beta-Hydrolases"/>
    <property type="match status" value="1"/>
</dbReference>
<dbReference type="PROSITE" id="PS01173">
    <property type="entry name" value="LIPASE_GDXG_HIS"/>
    <property type="match status" value="1"/>
</dbReference>
<dbReference type="PROSITE" id="PS01174">
    <property type="entry name" value="LIPASE_GDXG_SER"/>
    <property type="match status" value="1"/>
</dbReference>
<accession>B7UKF6</accession>
<protein>
    <recommendedName>
        <fullName evidence="2">Acetyl esterase</fullName>
        <ecNumber evidence="2">3.1.1.-</ecNumber>
    </recommendedName>
</protein>
<comment type="function">
    <text evidence="2">Displays esterase activity towards short chain fatty esters (acyl chain length of up to 8 carbons). Able to hydrolyze triacetylglycerol (triacetin) and tributyrylglycerol (tributyrin), but not trioleylglycerol (triolein) or cholesterol oleate. Negatively regulates MalT activity by antagonizing maltotriose binding. Inhibits MelA galactosidase activity.</text>
</comment>
<comment type="subunit">
    <text evidence="2">Homodimer. Interacts with MalT and MelA.</text>
</comment>
<comment type="subcellular location">
    <subcellularLocation>
        <location evidence="2">Cytoplasm</location>
    </subcellularLocation>
</comment>
<comment type="similarity">
    <text evidence="2">Belongs to the 'GDXG' lipolytic enzyme family.</text>
</comment>
<organism>
    <name type="scientific">Escherichia coli O127:H6 (strain E2348/69 / EPEC)</name>
    <dbReference type="NCBI Taxonomy" id="574521"/>
    <lineage>
        <taxon>Bacteria</taxon>
        <taxon>Pseudomonadati</taxon>
        <taxon>Pseudomonadota</taxon>
        <taxon>Gammaproteobacteria</taxon>
        <taxon>Enterobacterales</taxon>
        <taxon>Enterobacteriaceae</taxon>
        <taxon>Escherichia</taxon>
    </lineage>
</organism>
<name>AES_ECO27</name>
<evidence type="ECO:0000250" key="1">
    <source>
        <dbReference type="UniProtKB" id="Q5NUF3"/>
    </source>
</evidence>
<evidence type="ECO:0000255" key="2">
    <source>
        <dbReference type="HAMAP-Rule" id="MF_01958"/>
    </source>
</evidence>
<sequence length="319" mass="36103">MKPENKLPVLDLISAEMKTVVNTLQPDLPPWPATGTIAEQRQYYTLERRFWNVGAPEMATRAYRVPTKYGQVKTRIFYPQPDSPATLFYLHGGGFILGNLDTHDRIMRLLASYSQCTVIGIDYTLSPEARFPQAIEEIVAACCYFHQQAEDYQINMSRIGFAGDSAGAMLALASALWLRDKQIDCGKVAGVLLWYGLYGLRDSVTRRLLGGVWDGLTQQDLQMYEEAYLSNDADRESPYYCLFNNDLTREVPPCFIAGAEFDPLLDDSRLLYQTLAAHQQPCEFKLYPGTLHAFLHYSRMMKTADEALLDGAQFFTAQL</sequence>
<keyword id="KW-0963">Cytoplasm</keyword>
<keyword id="KW-0378">Hydrolase</keyword>
<keyword id="KW-1185">Reference proteome</keyword>
<keyword id="KW-0719">Serine esterase</keyword>
<reference key="1">
    <citation type="journal article" date="2009" name="J. Bacteriol.">
        <title>Complete genome sequence and comparative genome analysis of enteropathogenic Escherichia coli O127:H6 strain E2348/69.</title>
        <authorList>
            <person name="Iguchi A."/>
            <person name="Thomson N.R."/>
            <person name="Ogura Y."/>
            <person name="Saunders D."/>
            <person name="Ooka T."/>
            <person name="Henderson I.R."/>
            <person name="Harris D."/>
            <person name="Asadulghani M."/>
            <person name="Kurokawa K."/>
            <person name="Dean P."/>
            <person name="Kenny B."/>
            <person name="Quail M.A."/>
            <person name="Thurston S."/>
            <person name="Dougan G."/>
            <person name="Hayashi T."/>
            <person name="Parkhill J."/>
            <person name="Frankel G."/>
        </authorList>
    </citation>
    <scope>NUCLEOTIDE SEQUENCE [LARGE SCALE GENOMIC DNA]</scope>
    <source>
        <strain>E2348/69 / EPEC</strain>
    </source>
</reference>